<evidence type="ECO:0000255" key="1">
    <source>
        <dbReference type="HAMAP-Rule" id="MF_01143"/>
    </source>
</evidence>
<organism>
    <name type="scientific">Bacillus velezensis (strain DSM 23117 / BGSC 10A6 / LMG 26770 / FZB42)</name>
    <name type="common">Bacillus amyloliquefaciens subsp. plantarum</name>
    <dbReference type="NCBI Taxonomy" id="326423"/>
    <lineage>
        <taxon>Bacteria</taxon>
        <taxon>Bacillati</taxon>
        <taxon>Bacillota</taxon>
        <taxon>Bacilli</taxon>
        <taxon>Bacillales</taxon>
        <taxon>Bacillaceae</taxon>
        <taxon>Bacillus</taxon>
        <taxon>Bacillus amyloliquefaciens group</taxon>
    </lineage>
</organism>
<feature type="chain" id="PRO_1000065445" description="Holin-like protein CidA">
    <location>
        <begin position="1"/>
        <end position="128"/>
    </location>
</feature>
<feature type="transmembrane region" description="Helical" evidence="1">
    <location>
        <begin position="4"/>
        <end position="24"/>
    </location>
</feature>
<feature type="transmembrane region" description="Helical" evidence="1">
    <location>
        <begin position="27"/>
        <end position="46"/>
    </location>
</feature>
<feature type="transmembrane region" description="Helical" evidence="1">
    <location>
        <begin position="59"/>
        <end position="79"/>
    </location>
</feature>
<feature type="transmembrane region" description="Helical" evidence="1">
    <location>
        <begin position="88"/>
        <end position="108"/>
    </location>
</feature>
<gene>
    <name evidence="1" type="primary">cidA</name>
    <name type="ordered locus">RBAM_035580</name>
</gene>
<accession>A7ZA61</accession>
<proteinExistence type="inferred from homology"/>
<keyword id="KW-1003">Cell membrane</keyword>
<keyword id="KW-0204">Cytolysis</keyword>
<keyword id="KW-0472">Membrane</keyword>
<keyword id="KW-0812">Transmembrane</keyword>
<keyword id="KW-1133">Transmembrane helix</keyword>
<comment type="function">
    <text evidence="1">Increases the activity of extracellular murein hydrolases possibly by mediating their export via hole formation. Inhibited by the antiholin-like proteins LrgAB. In an unstressed cell, the LrgAB products probably inhibit the function of the CidA protein. When a cell is stressed by the addition of antibiotics or by other factors in the environment, CidA possibly oligomerizes within the bacterial cell membrane, creating lesions that disrupt the proton motive force, which in turn results in loss of cell viability. These lesions are also hypothesized to regulate the subsequent cell lysis by either allowing the murein hydrolases access to the cell wall substrate and/or regulating their activity by a possible change in the cell wall pH that results from loss of membrane potential.</text>
</comment>
<comment type="subcellular location">
    <subcellularLocation>
        <location evidence="1">Cell membrane</location>
        <topology evidence="1">Multi-pass membrane protein</topology>
    </subcellularLocation>
</comment>
<comment type="similarity">
    <text evidence="1">Belongs to the CidA/LrgA family. CidA subfamily.</text>
</comment>
<reference key="1">
    <citation type="journal article" date="2007" name="Nat. Biotechnol.">
        <title>Comparative analysis of the complete genome sequence of the plant growth-promoting bacterium Bacillus amyloliquefaciens FZB42.</title>
        <authorList>
            <person name="Chen X.H."/>
            <person name="Koumoutsi A."/>
            <person name="Scholz R."/>
            <person name="Eisenreich A."/>
            <person name="Schneider K."/>
            <person name="Heinemeyer I."/>
            <person name="Morgenstern B."/>
            <person name="Voss B."/>
            <person name="Hess W.R."/>
            <person name="Reva O."/>
            <person name="Junge H."/>
            <person name="Voigt B."/>
            <person name="Jungblut P.R."/>
            <person name="Vater J."/>
            <person name="Suessmuth R."/>
            <person name="Liesegang H."/>
            <person name="Strittmatter A."/>
            <person name="Gottschalk G."/>
            <person name="Borriss R."/>
        </authorList>
    </citation>
    <scope>NUCLEOTIDE SEQUENCE [LARGE SCALE GENOMIC DNA]</scope>
    <source>
        <strain>DSM 23117 / BGSC 10A6 / LMG 26770 / FZB42</strain>
    </source>
</reference>
<dbReference type="EMBL" id="CP000560">
    <property type="protein sequence ID" value="ABS75887.1"/>
    <property type="molecule type" value="Genomic_DNA"/>
</dbReference>
<dbReference type="RefSeq" id="WP_007407725.1">
    <property type="nucleotide sequence ID" value="NC_009725.2"/>
</dbReference>
<dbReference type="GeneID" id="93082700"/>
<dbReference type="KEGG" id="bay:RBAM_035580"/>
<dbReference type="HOGENOM" id="CLU_113736_3_2_9"/>
<dbReference type="Proteomes" id="UP000001120">
    <property type="component" value="Chromosome"/>
</dbReference>
<dbReference type="GO" id="GO:0005886">
    <property type="term" value="C:plasma membrane"/>
    <property type="evidence" value="ECO:0007669"/>
    <property type="project" value="UniProtKB-SubCell"/>
</dbReference>
<dbReference type="GO" id="GO:0019835">
    <property type="term" value="P:cytolysis"/>
    <property type="evidence" value="ECO:0007669"/>
    <property type="project" value="UniProtKB-UniRule"/>
</dbReference>
<dbReference type="GO" id="GO:0031640">
    <property type="term" value="P:killing of cells of another organism"/>
    <property type="evidence" value="ECO:0007669"/>
    <property type="project" value="UniProtKB-KW"/>
</dbReference>
<dbReference type="GO" id="GO:0012501">
    <property type="term" value="P:programmed cell death"/>
    <property type="evidence" value="ECO:0007669"/>
    <property type="project" value="UniProtKB-UniRule"/>
</dbReference>
<dbReference type="HAMAP" id="MF_01143">
    <property type="entry name" value="CidA"/>
    <property type="match status" value="1"/>
</dbReference>
<dbReference type="InterPro" id="IPR023760">
    <property type="entry name" value="Holin-like_CidA"/>
</dbReference>
<dbReference type="InterPro" id="IPR005538">
    <property type="entry name" value="LrgA/CidA"/>
</dbReference>
<dbReference type="NCBIfam" id="NF002460">
    <property type="entry name" value="PRK01658.1"/>
    <property type="match status" value="1"/>
</dbReference>
<dbReference type="PANTHER" id="PTHR33931:SF2">
    <property type="entry name" value="HOLIN-LIKE PROTEIN CIDA"/>
    <property type="match status" value="1"/>
</dbReference>
<dbReference type="PANTHER" id="PTHR33931">
    <property type="entry name" value="HOLIN-LIKE PROTEIN CIDA-RELATED"/>
    <property type="match status" value="1"/>
</dbReference>
<dbReference type="Pfam" id="PF03788">
    <property type="entry name" value="LrgA"/>
    <property type="match status" value="1"/>
</dbReference>
<protein>
    <recommendedName>
        <fullName evidence="1">Holin-like protein CidA</fullName>
    </recommendedName>
</protein>
<sequence>MKKLLLTVIQIALLFIFARLINWVTAALHINIPGSIIGIVILFTLLHFKIIKLEWIELGAAWLLGELLLFFIPSAVGVIEYGDIMSKFGVSILLVVVISTFVVMVSTGTLTQLIAKRKEKKQTCSSES</sequence>
<name>CIDA_BACVZ</name>